<protein>
    <recommendedName>
        <fullName evidence="1">Cytochrome b559 subunit beta</fullName>
    </recommendedName>
    <alternativeName>
        <fullName evidence="1">PSII reaction center subunit VI</fullName>
    </alternativeName>
</protein>
<feature type="chain" id="PRO_0000200399" description="Cytochrome b559 subunit beta">
    <location>
        <begin position="1"/>
        <end position="39"/>
    </location>
</feature>
<feature type="transmembrane region" description="Helical" evidence="1">
    <location>
        <begin position="14"/>
        <end position="30"/>
    </location>
</feature>
<feature type="binding site" description="axial binding residue" evidence="1">
    <location>
        <position position="18"/>
    </location>
    <ligand>
        <name>heme</name>
        <dbReference type="ChEBI" id="CHEBI:30413"/>
        <note>ligand shared with alpha subunit</note>
    </ligand>
    <ligandPart>
        <name>Fe</name>
        <dbReference type="ChEBI" id="CHEBI:18248"/>
    </ligandPart>
</feature>
<reference key="1">
    <citation type="journal article" date="2005" name="Gene">
        <title>The first complete chloroplast genome sequence of a lycophyte, Huperzia lucidula (Lycopodiaceae).</title>
        <authorList>
            <person name="Wolf P.G."/>
            <person name="Karol K.G."/>
            <person name="Mandoli D.F."/>
            <person name="Kuehl J.V."/>
            <person name="Arumuganathan K."/>
            <person name="Ellis M.W."/>
            <person name="Mishler B.D."/>
            <person name="Kelch D.G."/>
            <person name="Olmstead R.G."/>
            <person name="Boore J.L."/>
        </authorList>
    </citation>
    <scope>NUCLEOTIDE SEQUENCE [LARGE SCALE GENOMIC DNA]</scope>
</reference>
<dbReference type="EMBL" id="AY660566">
    <property type="protein sequence ID" value="AAT80710.1"/>
    <property type="molecule type" value="Genomic_DNA"/>
</dbReference>
<dbReference type="RefSeq" id="YP_209513.1">
    <property type="nucleotide sequence ID" value="NC_006861.1"/>
</dbReference>
<dbReference type="SMR" id="Q5SD42"/>
<dbReference type="GeneID" id="3283752"/>
<dbReference type="GO" id="GO:0009535">
    <property type="term" value="C:chloroplast thylakoid membrane"/>
    <property type="evidence" value="ECO:0007669"/>
    <property type="project" value="UniProtKB-SubCell"/>
</dbReference>
<dbReference type="GO" id="GO:0009539">
    <property type="term" value="C:photosystem II reaction center"/>
    <property type="evidence" value="ECO:0007669"/>
    <property type="project" value="InterPro"/>
</dbReference>
<dbReference type="GO" id="GO:0009055">
    <property type="term" value="F:electron transfer activity"/>
    <property type="evidence" value="ECO:0007669"/>
    <property type="project" value="UniProtKB-UniRule"/>
</dbReference>
<dbReference type="GO" id="GO:0020037">
    <property type="term" value="F:heme binding"/>
    <property type="evidence" value="ECO:0007669"/>
    <property type="project" value="InterPro"/>
</dbReference>
<dbReference type="GO" id="GO:0005506">
    <property type="term" value="F:iron ion binding"/>
    <property type="evidence" value="ECO:0007669"/>
    <property type="project" value="UniProtKB-UniRule"/>
</dbReference>
<dbReference type="GO" id="GO:0009767">
    <property type="term" value="P:photosynthetic electron transport chain"/>
    <property type="evidence" value="ECO:0007669"/>
    <property type="project" value="InterPro"/>
</dbReference>
<dbReference type="HAMAP" id="MF_00643">
    <property type="entry name" value="PSII_PsbF"/>
    <property type="match status" value="1"/>
</dbReference>
<dbReference type="InterPro" id="IPR006241">
    <property type="entry name" value="PSII_cyt_b559_bsu"/>
</dbReference>
<dbReference type="InterPro" id="IPR006216">
    <property type="entry name" value="PSII_cyt_b559_CS"/>
</dbReference>
<dbReference type="InterPro" id="IPR013081">
    <property type="entry name" value="PSII_cyt_b559_N"/>
</dbReference>
<dbReference type="NCBIfam" id="TIGR01333">
    <property type="entry name" value="cyt_b559_beta"/>
    <property type="match status" value="1"/>
</dbReference>
<dbReference type="Pfam" id="PF00283">
    <property type="entry name" value="Cytochrom_B559"/>
    <property type="match status" value="1"/>
</dbReference>
<dbReference type="PIRSF" id="PIRSF000037">
    <property type="entry name" value="PsbF"/>
    <property type="match status" value="1"/>
</dbReference>
<dbReference type="SUPFAM" id="SSF161045">
    <property type="entry name" value="Cytochrome b559 subunits"/>
    <property type="match status" value="1"/>
</dbReference>
<dbReference type="PROSITE" id="PS00537">
    <property type="entry name" value="CYTOCHROME_B559"/>
    <property type="match status" value="1"/>
</dbReference>
<accession>Q5SD42</accession>
<evidence type="ECO:0000255" key="1">
    <source>
        <dbReference type="HAMAP-Rule" id="MF_00643"/>
    </source>
</evidence>
<gene>
    <name evidence="1" type="primary">psbF</name>
</gene>
<comment type="function">
    <text evidence="1">This b-type cytochrome is tightly associated with the reaction center of photosystem II (PSII). PSII is a light-driven water:plastoquinone oxidoreductase that uses light energy to abstract electrons from H(2)O, generating O(2) and a proton gradient subsequently used for ATP formation. It consists of a core antenna complex that captures photons, and an electron transfer chain that converts photonic excitation into a charge separation.</text>
</comment>
<comment type="cofactor">
    <cofactor evidence="1">
        <name>heme b</name>
        <dbReference type="ChEBI" id="CHEBI:60344"/>
    </cofactor>
    <text evidence="1">With its partner (PsbE) binds heme. PSII binds additional chlorophylls, carotenoids and specific lipids.</text>
</comment>
<comment type="subunit">
    <text evidence="1">Heterodimer of an alpha subunit and a beta subunit. PSII is composed of 1 copy each of membrane proteins PsbA, PsbB, PsbC, PsbD, PsbE, PsbF, PsbH, PsbI, PsbJ, PsbK, PsbL, PsbM, PsbT, PsbX, PsbY, PsbZ, Psb30/Ycf12, at least 3 peripheral proteins of the oxygen-evolving complex and a large number of cofactors. It forms dimeric complexes.</text>
</comment>
<comment type="subcellular location">
    <subcellularLocation>
        <location evidence="1">Plastid</location>
        <location evidence="1">Chloroplast thylakoid membrane</location>
        <topology evidence="1">Single-pass membrane protein</topology>
    </subcellularLocation>
</comment>
<comment type="similarity">
    <text evidence="1">Belongs to the PsbE/PsbF family.</text>
</comment>
<organism>
    <name type="scientific">Huperzia lucidula</name>
    <name type="common">Shining clubmoss</name>
    <name type="synonym">Lycopodium lucidulum</name>
    <dbReference type="NCBI Taxonomy" id="37429"/>
    <lineage>
        <taxon>Eukaryota</taxon>
        <taxon>Viridiplantae</taxon>
        <taxon>Streptophyta</taxon>
        <taxon>Embryophyta</taxon>
        <taxon>Tracheophyta</taxon>
        <taxon>Lycopodiopsida</taxon>
        <taxon>Lycopodiales</taxon>
        <taxon>Lycopodiaceae</taxon>
        <taxon>Huperzioideae</taxon>
        <taxon>Huperzia</taxon>
    </lineage>
</organism>
<proteinExistence type="inferred from homology"/>
<sequence length="39" mass="4438">MTIDRTYPIFTVRWLAIHGLAVPTVFSLGSISAMQFIQR</sequence>
<keyword id="KW-0150">Chloroplast</keyword>
<keyword id="KW-0249">Electron transport</keyword>
<keyword id="KW-0349">Heme</keyword>
<keyword id="KW-0408">Iron</keyword>
<keyword id="KW-0472">Membrane</keyword>
<keyword id="KW-0479">Metal-binding</keyword>
<keyword id="KW-0602">Photosynthesis</keyword>
<keyword id="KW-0604">Photosystem II</keyword>
<keyword id="KW-0934">Plastid</keyword>
<keyword id="KW-0793">Thylakoid</keyword>
<keyword id="KW-0812">Transmembrane</keyword>
<keyword id="KW-1133">Transmembrane helix</keyword>
<keyword id="KW-0813">Transport</keyword>
<name>PSBF_HUPLU</name>
<geneLocation type="chloroplast"/>